<dbReference type="EC" id="3.5.1.5" evidence="1"/>
<dbReference type="EMBL" id="CP001074">
    <property type="protein sequence ID" value="ACE92497.1"/>
    <property type="molecule type" value="Genomic_DNA"/>
</dbReference>
<dbReference type="SMR" id="B3PXB6"/>
<dbReference type="KEGG" id="rec:RHECIAT_CH0003551"/>
<dbReference type="eggNOG" id="COG0832">
    <property type="taxonomic scope" value="Bacteria"/>
</dbReference>
<dbReference type="HOGENOM" id="CLU_129707_1_1_5"/>
<dbReference type="UniPathway" id="UPA00258">
    <property type="reaction ID" value="UER00370"/>
</dbReference>
<dbReference type="Proteomes" id="UP000008817">
    <property type="component" value="Chromosome"/>
</dbReference>
<dbReference type="GO" id="GO:0035550">
    <property type="term" value="C:urease complex"/>
    <property type="evidence" value="ECO:0007669"/>
    <property type="project" value="InterPro"/>
</dbReference>
<dbReference type="GO" id="GO:0009039">
    <property type="term" value="F:urease activity"/>
    <property type="evidence" value="ECO:0007669"/>
    <property type="project" value="UniProtKB-UniRule"/>
</dbReference>
<dbReference type="GO" id="GO:0043419">
    <property type="term" value="P:urea catabolic process"/>
    <property type="evidence" value="ECO:0007669"/>
    <property type="project" value="UniProtKB-UniRule"/>
</dbReference>
<dbReference type="CDD" id="cd00407">
    <property type="entry name" value="Urease_beta"/>
    <property type="match status" value="1"/>
</dbReference>
<dbReference type="FunFam" id="2.10.150.10:FF:000001">
    <property type="entry name" value="Urease subunit beta"/>
    <property type="match status" value="1"/>
</dbReference>
<dbReference type="Gene3D" id="2.10.150.10">
    <property type="entry name" value="Urease, beta subunit"/>
    <property type="match status" value="1"/>
</dbReference>
<dbReference type="HAMAP" id="MF_01954">
    <property type="entry name" value="Urease_beta"/>
    <property type="match status" value="1"/>
</dbReference>
<dbReference type="InterPro" id="IPR002019">
    <property type="entry name" value="Urease_beta-like"/>
</dbReference>
<dbReference type="InterPro" id="IPR036461">
    <property type="entry name" value="Urease_betasu_sf"/>
</dbReference>
<dbReference type="InterPro" id="IPR050069">
    <property type="entry name" value="Urease_subunit"/>
</dbReference>
<dbReference type="NCBIfam" id="NF009682">
    <property type="entry name" value="PRK13203.1"/>
    <property type="match status" value="1"/>
</dbReference>
<dbReference type="NCBIfam" id="TIGR00192">
    <property type="entry name" value="urease_beta"/>
    <property type="match status" value="1"/>
</dbReference>
<dbReference type="PANTHER" id="PTHR33569">
    <property type="entry name" value="UREASE"/>
    <property type="match status" value="1"/>
</dbReference>
<dbReference type="PANTHER" id="PTHR33569:SF1">
    <property type="entry name" value="UREASE"/>
    <property type="match status" value="1"/>
</dbReference>
<dbReference type="Pfam" id="PF00699">
    <property type="entry name" value="Urease_beta"/>
    <property type="match status" value="1"/>
</dbReference>
<dbReference type="SUPFAM" id="SSF51278">
    <property type="entry name" value="Urease, beta-subunit"/>
    <property type="match status" value="1"/>
</dbReference>
<feature type="chain" id="PRO_1000188937" description="Urease subunit beta">
    <location>
        <begin position="1"/>
        <end position="101"/>
    </location>
</feature>
<keyword id="KW-0963">Cytoplasm</keyword>
<keyword id="KW-0378">Hydrolase</keyword>
<sequence>MIPGEIIAASGDIELNAGAPTVTLEVSNTGDRPVQVGSHYHFAETNAGLSFDRAAAHGKRLDIPSGTAVRFEPGQTRSVTLIPLAGKREVYGFRQLVMGKL</sequence>
<protein>
    <recommendedName>
        <fullName evidence="1">Urease subunit beta</fullName>
        <ecNumber evidence="1">3.5.1.5</ecNumber>
    </recommendedName>
    <alternativeName>
        <fullName evidence="1">Urea amidohydrolase subunit beta</fullName>
    </alternativeName>
</protein>
<proteinExistence type="inferred from homology"/>
<reference key="1">
    <citation type="journal article" date="2010" name="Appl. Environ. Microbiol.">
        <title>Conserved symbiotic plasmid DNA sequences in the multireplicon pangenomic structure of Rhizobium etli.</title>
        <authorList>
            <person name="Gonzalez V."/>
            <person name="Acosta J.L."/>
            <person name="Santamaria R.I."/>
            <person name="Bustos P."/>
            <person name="Fernandez J.L."/>
            <person name="Hernandez Gonzalez I.L."/>
            <person name="Diaz R."/>
            <person name="Flores M."/>
            <person name="Palacios R."/>
            <person name="Mora J."/>
            <person name="Davila G."/>
        </authorList>
    </citation>
    <scope>NUCLEOTIDE SEQUENCE [LARGE SCALE GENOMIC DNA]</scope>
    <source>
        <strain>CIAT 652</strain>
    </source>
</reference>
<comment type="catalytic activity">
    <reaction evidence="1">
        <text>urea + 2 H2O + H(+) = hydrogencarbonate + 2 NH4(+)</text>
        <dbReference type="Rhea" id="RHEA:20557"/>
        <dbReference type="ChEBI" id="CHEBI:15377"/>
        <dbReference type="ChEBI" id="CHEBI:15378"/>
        <dbReference type="ChEBI" id="CHEBI:16199"/>
        <dbReference type="ChEBI" id="CHEBI:17544"/>
        <dbReference type="ChEBI" id="CHEBI:28938"/>
        <dbReference type="EC" id="3.5.1.5"/>
    </reaction>
</comment>
<comment type="pathway">
    <text evidence="1">Nitrogen metabolism; urea degradation; CO(2) and NH(3) from urea (urease route): step 1/1.</text>
</comment>
<comment type="subunit">
    <text evidence="1">Heterotrimer of UreA (gamma), UreB (beta) and UreC (alpha) subunits. Three heterotrimers associate to form the active enzyme.</text>
</comment>
<comment type="subcellular location">
    <subcellularLocation>
        <location evidence="1">Cytoplasm</location>
    </subcellularLocation>
</comment>
<comment type="similarity">
    <text evidence="1">Belongs to the urease beta subunit family.</text>
</comment>
<name>URE2_RHIE6</name>
<accession>B3PXB6</accession>
<evidence type="ECO:0000255" key="1">
    <source>
        <dbReference type="HAMAP-Rule" id="MF_01954"/>
    </source>
</evidence>
<organism>
    <name type="scientific">Rhizobium etli (strain CIAT 652)</name>
    <dbReference type="NCBI Taxonomy" id="491916"/>
    <lineage>
        <taxon>Bacteria</taxon>
        <taxon>Pseudomonadati</taxon>
        <taxon>Pseudomonadota</taxon>
        <taxon>Alphaproteobacteria</taxon>
        <taxon>Hyphomicrobiales</taxon>
        <taxon>Rhizobiaceae</taxon>
        <taxon>Rhizobium/Agrobacterium group</taxon>
        <taxon>Rhizobium</taxon>
    </lineage>
</organism>
<gene>
    <name evidence="1" type="primary">ureB</name>
    <name type="ordered locus">RHECIAT_CH0003551</name>
</gene>